<name>MSTN1_XENLA</name>
<comment type="function">
    <text evidence="4">Required for craniofacial chondrogenesis.</text>
</comment>
<comment type="subcellular location">
    <subcellularLocation>
        <location evidence="1">Nucleus</location>
    </subcellularLocation>
</comment>
<comment type="disruption phenotype">
    <text evidence="4">Morpholino knockdown in embryonic craniofacial and dorsal axial tissues results in head and body axis defects with abnormal head chondrogenesis, small or absent eyes, reduced body axis length and tail kinks.</text>
</comment>
<comment type="similarity">
    <text evidence="5">Belongs to the MUSTN1 family.</text>
</comment>
<gene>
    <name type="primary">mustn1</name>
</gene>
<sequence length="80" mass="8705">MSQPQDAPVKKKRPPMKEEDLKGAKNKLAHQVPIKSKTYQVMKECEQSGTMAPSVFSQNKTGGETAFDKPKAGPAKSVFG</sequence>
<protein>
    <recommendedName>
        <fullName>Musculoskeletal embryonic nuclear protein 1</fullName>
    </recommendedName>
</protein>
<proteinExistence type="inferred from homology"/>
<evidence type="ECO:0000250" key="1">
    <source>
        <dbReference type="UniProtKB" id="Q80XX4"/>
    </source>
</evidence>
<evidence type="ECO:0000255" key="2"/>
<evidence type="ECO:0000256" key="3">
    <source>
        <dbReference type="SAM" id="MobiDB-lite"/>
    </source>
</evidence>
<evidence type="ECO:0000269" key="4">
    <source>
    </source>
</evidence>
<evidence type="ECO:0000305" key="5"/>
<dbReference type="EMBL" id="BC123175">
    <property type="protein sequence ID" value="AAI23176.1"/>
    <property type="molecule type" value="mRNA"/>
</dbReference>
<dbReference type="RefSeq" id="NP_001165126.1">
    <property type="nucleotide sequence ID" value="NM_001171655.1"/>
</dbReference>
<dbReference type="SMR" id="Q05AX4"/>
<dbReference type="DNASU" id="779236"/>
<dbReference type="GeneID" id="779236"/>
<dbReference type="KEGG" id="xla:779236"/>
<dbReference type="AGR" id="Xenbase:XB-GENE-6078553"/>
<dbReference type="CTD" id="779236"/>
<dbReference type="Xenbase" id="XB-GENE-6078553">
    <property type="gene designation" value="mustn1.L"/>
</dbReference>
<dbReference type="OrthoDB" id="9976882at2759"/>
<dbReference type="Proteomes" id="UP000186698">
    <property type="component" value="Chromosome 4L"/>
</dbReference>
<dbReference type="Bgee" id="779236">
    <property type="expression patterns" value="Expressed in muscle tissue and 16 other cell types or tissues"/>
</dbReference>
<dbReference type="GO" id="GO:0005634">
    <property type="term" value="C:nucleus"/>
    <property type="evidence" value="ECO:0007669"/>
    <property type="project" value="UniProtKB-SubCell"/>
</dbReference>
<dbReference type="GO" id="GO:0002062">
    <property type="term" value="P:chondrocyte differentiation"/>
    <property type="evidence" value="ECO:0007669"/>
    <property type="project" value="InterPro"/>
</dbReference>
<dbReference type="GO" id="GO:0035988">
    <property type="term" value="P:chondrocyte proliferation"/>
    <property type="evidence" value="ECO:0007669"/>
    <property type="project" value="InterPro"/>
</dbReference>
<dbReference type="GO" id="GO:0042246">
    <property type="term" value="P:tissue regeneration"/>
    <property type="evidence" value="ECO:0007669"/>
    <property type="project" value="InterPro"/>
</dbReference>
<dbReference type="InterPro" id="IPR031394">
    <property type="entry name" value="MUSTN1"/>
</dbReference>
<dbReference type="Pfam" id="PF15682">
    <property type="entry name" value="Mustang"/>
    <property type="match status" value="1"/>
</dbReference>
<accession>Q05AX4</accession>
<keyword id="KW-0891">Chondrogenesis</keyword>
<keyword id="KW-0539">Nucleus</keyword>
<keyword id="KW-1185">Reference proteome</keyword>
<reference key="1">
    <citation type="submission" date="2006-09" db="EMBL/GenBank/DDBJ databases">
        <authorList>
            <consortium name="NIH - Xenopus Gene Collection (XGC) project"/>
        </authorList>
    </citation>
    <scope>NUCLEOTIDE SEQUENCE [LARGE SCALE MRNA]</scope>
    <source>
        <tissue>Fat body</tissue>
    </source>
</reference>
<reference key="2">
    <citation type="journal article" date="2012" name="Gene Expr. Patterns">
        <title>Mustn1 is essential for craniofacial chondrogenesis during Xenopus development.</title>
        <authorList>
            <person name="Gersch R.P."/>
            <person name="Kirmizitas A."/>
            <person name="Sobkow L."/>
            <person name="Sorrentino G."/>
            <person name="Thomsen G.H."/>
            <person name="Hadjiargyrou M."/>
        </authorList>
    </citation>
    <scope>FUNCTION</scope>
    <scope>DISRUPTION PHENOTYPE</scope>
</reference>
<feature type="chain" id="PRO_0000299451" description="Musculoskeletal embryonic nuclear protein 1">
    <location>
        <begin position="1"/>
        <end position="80"/>
    </location>
</feature>
<feature type="region of interest" description="Disordered" evidence="3">
    <location>
        <begin position="1"/>
        <end position="27"/>
    </location>
</feature>
<feature type="region of interest" description="Disordered" evidence="3">
    <location>
        <begin position="50"/>
        <end position="80"/>
    </location>
</feature>
<feature type="short sequence motif" description="Nuclear localization signal" evidence="2">
    <location>
        <begin position="8"/>
        <end position="16"/>
    </location>
</feature>
<feature type="compositionally biased region" description="Polar residues" evidence="3">
    <location>
        <begin position="50"/>
        <end position="62"/>
    </location>
</feature>
<organism>
    <name type="scientific">Xenopus laevis</name>
    <name type="common">African clawed frog</name>
    <dbReference type="NCBI Taxonomy" id="8355"/>
    <lineage>
        <taxon>Eukaryota</taxon>
        <taxon>Metazoa</taxon>
        <taxon>Chordata</taxon>
        <taxon>Craniata</taxon>
        <taxon>Vertebrata</taxon>
        <taxon>Euteleostomi</taxon>
        <taxon>Amphibia</taxon>
        <taxon>Batrachia</taxon>
        <taxon>Anura</taxon>
        <taxon>Pipoidea</taxon>
        <taxon>Pipidae</taxon>
        <taxon>Xenopodinae</taxon>
        <taxon>Xenopus</taxon>
        <taxon>Xenopus</taxon>
    </lineage>
</organism>